<name>PURBB_XENLA</name>
<comment type="function">
    <text evidence="2">Transcriptional regulator which can act as an activator or a repressor.</text>
</comment>
<comment type="subcellular location">
    <subcellularLocation>
        <location evidence="2">Nucleus</location>
    </subcellularLocation>
</comment>
<comment type="similarity">
    <text evidence="5">Belongs to the PUR DNA-binding protein family.</text>
</comment>
<reference key="1">
    <citation type="submission" date="2002-12" db="EMBL/GenBank/DDBJ databases">
        <authorList>
            <consortium name="NIH - Xenopus Gene Collection (XGC) project"/>
        </authorList>
    </citation>
    <scope>NUCLEOTIDE SEQUENCE [LARGE SCALE MRNA]</scope>
    <source>
        <tissue>Embryo</tissue>
    </source>
</reference>
<proteinExistence type="evidence at transcript level"/>
<feature type="initiator methionine" description="Removed" evidence="1">
    <location>
        <position position="1"/>
    </location>
</feature>
<feature type="chain" id="PRO_0000225620" description="Transcriptional regulator protein Pur-beta-B">
    <location>
        <begin position="2"/>
        <end position="328"/>
    </location>
</feature>
<feature type="region of interest" description="Disordered" evidence="4">
    <location>
        <begin position="1"/>
        <end position="35"/>
    </location>
</feature>
<feature type="region of interest" description="DNA-binding" evidence="2">
    <location>
        <begin position="27"/>
        <end position="260"/>
    </location>
</feature>
<feature type="region of interest" description="Disordered" evidence="4">
    <location>
        <begin position="100"/>
        <end position="124"/>
    </location>
</feature>
<feature type="region of interest" description="Disordered" evidence="4">
    <location>
        <begin position="289"/>
        <end position="328"/>
    </location>
</feature>
<feature type="compositionally biased region" description="Gly residues" evidence="4">
    <location>
        <begin position="9"/>
        <end position="18"/>
    </location>
</feature>
<feature type="compositionally biased region" description="Basic and acidic residues" evidence="4">
    <location>
        <begin position="24"/>
        <end position="35"/>
    </location>
</feature>
<feature type="compositionally biased region" description="Basic and acidic residues" evidence="4">
    <location>
        <begin position="289"/>
        <end position="303"/>
    </location>
</feature>
<feature type="compositionally biased region" description="Gly residues" evidence="4">
    <location>
        <begin position="304"/>
        <end position="317"/>
    </location>
</feature>
<feature type="compositionally biased region" description="Acidic residues" evidence="4">
    <location>
        <begin position="318"/>
        <end position="328"/>
    </location>
</feature>
<feature type="modified residue" description="N-acetylalanine" evidence="3">
    <location>
        <position position="2"/>
    </location>
</feature>
<protein>
    <recommendedName>
        <fullName>Transcriptional regulator protein Pur-beta-B</fullName>
    </recommendedName>
    <alternativeName>
        <fullName>Purine-rich element-binding protein B-B</fullName>
    </alternativeName>
</protein>
<organism>
    <name type="scientific">Xenopus laevis</name>
    <name type="common">African clawed frog</name>
    <dbReference type="NCBI Taxonomy" id="8355"/>
    <lineage>
        <taxon>Eukaryota</taxon>
        <taxon>Metazoa</taxon>
        <taxon>Chordata</taxon>
        <taxon>Craniata</taxon>
        <taxon>Vertebrata</taxon>
        <taxon>Euteleostomi</taxon>
        <taxon>Amphibia</taxon>
        <taxon>Batrachia</taxon>
        <taxon>Anura</taxon>
        <taxon>Pipoidea</taxon>
        <taxon>Pipidae</taxon>
        <taxon>Xenopodinae</taxon>
        <taxon>Xenopus</taxon>
        <taxon>Xenopus</taxon>
    </lineage>
</organism>
<gene>
    <name type="primary">purb-b</name>
</gene>
<evidence type="ECO:0000250" key="1"/>
<evidence type="ECO:0000250" key="2">
    <source>
        <dbReference type="UniProtKB" id="O35295"/>
    </source>
</evidence>
<evidence type="ECO:0000250" key="3">
    <source>
        <dbReference type="UniProtKB" id="Q96QR8"/>
    </source>
</evidence>
<evidence type="ECO:0000256" key="4">
    <source>
        <dbReference type="SAM" id="MobiDB-lite"/>
    </source>
</evidence>
<evidence type="ECO:0000305" key="5"/>
<sequence length="328" mass="34987">MADGDSGSERGGSSGGPSGFSQHMSREQETQELASKRLDIQNKRFYLDVKQNAKGRFIKIAEVGAGGSKSRLTLSMAVAAEFRDYLGDFIEHYAQLGPSSPEQIAQASGEDGAGGPGGPRRALKSEFLVRENRKYYLDLKENQRGRFLRIRQTINRGPGFSGGTGGGPGLQSGQTIALPAQGLIEFRDALAKLIDDYGGEDDEGMGLGSGASGGGAGGGGMYGELPEGTSITVDSKRFFFDVGSNKYGVFLRVSEVKPSYRNSITVPLKAWGKFGGAFCRYSEEMKEIQERQRDKMYDRRGPGERGGSLGPGAGGGGDDSETEDVDDD</sequence>
<accession>Q8AVS4</accession>
<keyword id="KW-0007">Acetylation</keyword>
<keyword id="KW-0010">Activator</keyword>
<keyword id="KW-0238">DNA-binding</keyword>
<keyword id="KW-0539">Nucleus</keyword>
<keyword id="KW-1185">Reference proteome</keyword>
<keyword id="KW-0678">Repressor</keyword>
<keyword id="KW-0804">Transcription</keyword>
<keyword id="KW-0805">Transcription regulation</keyword>
<dbReference type="EMBL" id="BC041305">
    <property type="protein sequence ID" value="AAH41305.1"/>
    <property type="molecule type" value="mRNA"/>
</dbReference>
<dbReference type="RefSeq" id="NP_001079178.1">
    <property type="nucleotide sequence ID" value="NM_001085709.1"/>
</dbReference>
<dbReference type="SMR" id="Q8AVS4"/>
<dbReference type="BioGRID" id="96996">
    <property type="interactions" value="1"/>
</dbReference>
<dbReference type="DNASU" id="373775"/>
<dbReference type="GeneID" id="373775"/>
<dbReference type="KEGG" id="xla:373775"/>
<dbReference type="AGR" id="Xenbase:XB-GENE-949708"/>
<dbReference type="CTD" id="373775"/>
<dbReference type="Xenbase" id="XB-GENE-949708">
    <property type="gene designation" value="purb.S"/>
</dbReference>
<dbReference type="OMA" id="MYDRRGP"/>
<dbReference type="OrthoDB" id="523901at2759"/>
<dbReference type="Proteomes" id="UP000186698">
    <property type="component" value="Chromosome 3S"/>
</dbReference>
<dbReference type="Bgee" id="373775">
    <property type="expression patterns" value="Expressed in internal ear and 19 other cell types or tissues"/>
</dbReference>
<dbReference type="GO" id="GO:0005634">
    <property type="term" value="C:nucleus"/>
    <property type="evidence" value="ECO:0000250"/>
    <property type="project" value="UniProtKB"/>
</dbReference>
<dbReference type="GO" id="GO:0000981">
    <property type="term" value="F:DNA-binding transcription factor activity, RNA polymerase II-specific"/>
    <property type="evidence" value="ECO:0000318"/>
    <property type="project" value="GO_Central"/>
</dbReference>
<dbReference type="GO" id="GO:0001227">
    <property type="term" value="F:DNA-binding transcription repressor activity, RNA polymerase II-specific"/>
    <property type="evidence" value="ECO:0000250"/>
    <property type="project" value="UniProtKB"/>
</dbReference>
<dbReference type="GO" id="GO:0032422">
    <property type="term" value="F:purine-rich negative regulatory element binding"/>
    <property type="evidence" value="ECO:0000318"/>
    <property type="project" value="GO_Central"/>
</dbReference>
<dbReference type="GO" id="GO:0000977">
    <property type="term" value="F:RNA polymerase II transcription regulatory region sequence-specific DNA binding"/>
    <property type="evidence" value="ECO:0000318"/>
    <property type="project" value="GO_Central"/>
</dbReference>
<dbReference type="GO" id="GO:0045944">
    <property type="term" value="P:positive regulation of transcription by RNA polymerase II"/>
    <property type="evidence" value="ECO:0000250"/>
    <property type="project" value="UniProtKB"/>
</dbReference>
<dbReference type="GO" id="GO:0006357">
    <property type="term" value="P:regulation of transcription by RNA polymerase II"/>
    <property type="evidence" value="ECO:0000318"/>
    <property type="project" value="GO_Central"/>
</dbReference>
<dbReference type="FunFam" id="3.10.450.700:FF:000001">
    <property type="entry name" value="Purine-rich element binding protein A"/>
    <property type="match status" value="1"/>
</dbReference>
<dbReference type="FunFam" id="3.30.2450.30:FF:000001">
    <property type="entry name" value="Purine-rich element binding protein A"/>
    <property type="match status" value="1"/>
</dbReference>
<dbReference type="Gene3D" id="3.10.450.700">
    <property type="match status" value="1"/>
</dbReference>
<dbReference type="Gene3D" id="3.30.2450.30">
    <property type="match status" value="1"/>
</dbReference>
<dbReference type="InterPro" id="IPR006628">
    <property type="entry name" value="PUR-bd_fam"/>
</dbReference>
<dbReference type="PANTHER" id="PTHR12611">
    <property type="entry name" value="PUR-TRANSCRIPTIONAL ACTIVATOR"/>
    <property type="match status" value="1"/>
</dbReference>
<dbReference type="PANTHER" id="PTHR12611:SF4">
    <property type="entry name" value="TRANSCRIPTIONAL ACTIVATOR PROTEIN PUR-BETA"/>
    <property type="match status" value="1"/>
</dbReference>
<dbReference type="Pfam" id="PF04845">
    <property type="entry name" value="PurA"/>
    <property type="match status" value="1"/>
</dbReference>
<dbReference type="SMART" id="SM00712">
    <property type="entry name" value="PUR"/>
    <property type="match status" value="3"/>
</dbReference>